<accession>Q31S12</accession>
<gene>
    <name evidence="1" type="primary">hisB</name>
    <name type="ordered locus">Synpcc7942_0125</name>
</gene>
<name>HIS7_SYNE7</name>
<feature type="chain" id="PRO_0000336351" description="Imidazoleglycerol-phosphate dehydratase">
    <location>
        <begin position="1"/>
        <end position="209"/>
    </location>
</feature>
<feature type="region of interest" description="Disordered" evidence="2">
    <location>
        <begin position="1"/>
        <end position="23"/>
    </location>
</feature>
<evidence type="ECO:0000255" key="1">
    <source>
        <dbReference type="HAMAP-Rule" id="MF_00076"/>
    </source>
</evidence>
<evidence type="ECO:0000256" key="2">
    <source>
        <dbReference type="SAM" id="MobiDB-lite"/>
    </source>
</evidence>
<organism>
    <name type="scientific">Synechococcus elongatus (strain ATCC 33912 / PCC 7942 / FACHB-805)</name>
    <name type="common">Anacystis nidulans R2</name>
    <dbReference type="NCBI Taxonomy" id="1140"/>
    <lineage>
        <taxon>Bacteria</taxon>
        <taxon>Bacillati</taxon>
        <taxon>Cyanobacteriota</taxon>
        <taxon>Cyanophyceae</taxon>
        <taxon>Synechococcales</taxon>
        <taxon>Synechococcaceae</taxon>
        <taxon>Synechococcus</taxon>
    </lineage>
</organism>
<proteinExistence type="inferred from homology"/>
<comment type="catalytic activity">
    <reaction evidence="1">
        <text>D-erythro-1-(imidazol-4-yl)glycerol 3-phosphate = 3-(imidazol-4-yl)-2-oxopropyl phosphate + H2O</text>
        <dbReference type="Rhea" id="RHEA:11040"/>
        <dbReference type="ChEBI" id="CHEBI:15377"/>
        <dbReference type="ChEBI" id="CHEBI:57766"/>
        <dbReference type="ChEBI" id="CHEBI:58278"/>
        <dbReference type="EC" id="4.2.1.19"/>
    </reaction>
</comment>
<comment type="pathway">
    <text evidence="1">Amino-acid biosynthesis; L-histidine biosynthesis; L-histidine from 5-phospho-alpha-D-ribose 1-diphosphate: step 6/9.</text>
</comment>
<comment type="subcellular location">
    <subcellularLocation>
        <location evidence="1">Cytoplasm</location>
    </subcellularLocation>
</comment>
<comment type="similarity">
    <text evidence="1">Belongs to the imidazoleglycerol-phosphate dehydratase family.</text>
</comment>
<dbReference type="EC" id="4.2.1.19" evidence="1"/>
<dbReference type="EMBL" id="CP000100">
    <property type="protein sequence ID" value="ABB56157.1"/>
    <property type="molecule type" value="Genomic_DNA"/>
</dbReference>
<dbReference type="RefSeq" id="WP_011243691.1">
    <property type="nucleotide sequence ID" value="NZ_JACJTX010000002.1"/>
</dbReference>
<dbReference type="SMR" id="Q31S12"/>
<dbReference type="STRING" id="1140.Synpcc7942_0125"/>
<dbReference type="PaxDb" id="1140-Synpcc7942_0125"/>
<dbReference type="GeneID" id="72428937"/>
<dbReference type="KEGG" id="syf:Synpcc7942_0125"/>
<dbReference type="eggNOG" id="COG0131">
    <property type="taxonomic scope" value="Bacteria"/>
</dbReference>
<dbReference type="HOGENOM" id="CLU_044308_3_0_3"/>
<dbReference type="OrthoDB" id="9790411at2"/>
<dbReference type="BioCyc" id="SYNEL:SYNPCC7942_0125-MONOMER"/>
<dbReference type="UniPathway" id="UPA00031">
    <property type="reaction ID" value="UER00011"/>
</dbReference>
<dbReference type="Proteomes" id="UP000889800">
    <property type="component" value="Chromosome"/>
</dbReference>
<dbReference type="GO" id="GO:0005737">
    <property type="term" value="C:cytoplasm"/>
    <property type="evidence" value="ECO:0007669"/>
    <property type="project" value="UniProtKB-SubCell"/>
</dbReference>
<dbReference type="GO" id="GO:0004424">
    <property type="term" value="F:imidazoleglycerol-phosphate dehydratase activity"/>
    <property type="evidence" value="ECO:0007669"/>
    <property type="project" value="UniProtKB-UniRule"/>
</dbReference>
<dbReference type="GO" id="GO:0000105">
    <property type="term" value="P:L-histidine biosynthetic process"/>
    <property type="evidence" value="ECO:0007669"/>
    <property type="project" value="UniProtKB-UniRule"/>
</dbReference>
<dbReference type="CDD" id="cd07914">
    <property type="entry name" value="IGPD"/>
    <property type="match status" value="1"/>
</dbReference>
<dbReference type="FunFam" id="3.30.230.40:FF:000002">
    <property type="entry name" value="Imidazoleglycerol-phosphate dehydratase"/>
    <property type="match status" value="1"/>
</dbReference>
<dbReference type="FunFam" id="3.30.230.40:FF:000003">
    <property type="entry name" value="Imidazoleglycerol-phosphate dehydratase HisB"/>
    <property type="match status" value="1"/>
</dbReference>
<dbReference type="Gene3D" id="3.30.230.40">
    <property type="entry name" value="Imidazole glycerol phosphate dehydratase, domain 1"/>
    <property type="match status" value="2"/>
</dbReference>
<dbReference type="HAMAP" id="MF_00076">
    <property type="entry name" value="HisB"/>
    <property type="match status" value="1"/>
</dbReference>
<dbReference type="InterPro" id="IPR038494">
    <property type="entry name" value="IGPD_sf"/>
</dbReference>
<dbReference type="InterPro" id="IPR000807">
    <property type="entry name" value="ImidazoleglycerolP_deHydtase"/>
</dbReference>
<dbReference type="InterPro" id="IPR020565">
    <property type="entry name" value="ImidazoleglycerP_deHydtase_CS"/>
</dbReference>
<dbReference type="InterPro" id="IPR020568">
    <property type="entry name" value="Ribosomal_Su5_D2-typ_SF"/>
</dbReference>
<dbReference type="NCBIfam" id="NF002108">
    <property type="entry name" value="PRK00951.1-3"/>
    <property type="match status" value="1"/>
</dbReference>
<dbReference type="NCBIfam" id="NF002111">
    <property type="entry name" value="PRK00951.2-1"/>
    <property type="match status" value="1"/>
</dbReference>
<dbReference type="NCBIfam" id="NF002114">
    <property type="entry name" value="PRK00951.2-4"/>
    <property type="match status" value="1"/>
</dbReference>
<dbReference type="PANTHER" id="PTHR23133:SF2">
    <property type="entry name" value="IMIDAZOLEGLYCEROL-PHOSPHATE DEHYDRATASE"/>
    <property type="match status" value="1"/>
</dbReference>
<dbReference type="PANTHER" id="PTHR23133">
    <property type="entry name" value="IMIDAZOLEGLYCEROL-PHOSPHATE DEHYDRATASE HIS7"/>
    <property type="match status" value="1"/>
</dbReference>
<dbReference type="Pfam" id="PF00475">
    <property type="entry name" value="IGPD"/>
    <property type="match status" value="1"/>
</dbReference>
<dbReference type="SUPFAM" id="SSF54211">
    <property type="entry name" value="Ribosomal protein S5 domain 2-like"/>
    <property type="match status" value="2"/>
</dbReference>
<dbReference type="PROSITE" id="PS00954">
    <property type="entry name" value="IGP_DEHYDRATASE_1"/>
    <property type="match status" value="1"/>
</dbReference>
<dbReference type="PROSITE" id="PS00955">
    <property type="entry name" value="IGP_DEHYDRATASE_2"/>
    <property type="match status" value="1"/>
</dbReference>
<protein>
    <recommendedName>
        <fullName evidence="1">Imidazoleglycerol-phosphate dehydratase</fullName>
        <shortName evidence="1">IGPD</shortName>
        <ecNumber evidence="1">4.2.1.19</ecNumber>
    </recommendedName>
</protein>
<reference key="1">
    <citation type="submission" date="2005-08" db="EMBL/GenBank/DDBJ databases">
        <title>Complete sequence of chromosome 1 of Synechococcus elongatus PCC 7942.</title>
        <authorList>
            <consortium name="US DOE Joint Genome Institute"/>
            <person name="Copeland A."/>
            <person name="Lucas S."/>
            <person name="Lapidus A."/>
            <person name="Barry K."/>
            <person name="Detter J.C."/>
            <person name="Glavina T."/>
            <person name="Hammon N."/>
            <person name="Israni S."/>
            <person name="Pitluck S."/>
            <person name="Schmutz J."/>
            <person name="Larimer F."/>
            <person name="Land M."/>
            <person name="Kyrpides N."/>
            <person name="Lykidis A."/>
            <person name="Golden S."/>
            <person name="Richardson P."/>
        </authorList>
    </citation>
    <scope>NUCLEOTIDE SEQUENCE [LARGE SCALE GENOMIC DNA]</scope>
    <source>
        <strain>ATCC 33912 / PCC 7942 / FACHB-805</strain>
    </source>
</reference>
<keyword id="KW-0028">Amino-acid biosynthesis</keyword>
<keyword id="KW-0963">Cytoplasm</keyword>
<keyword id="KW-0368">Histidine biosynthesis</keyword>
<keyword id="KW-0456">Lyase</keyword>
<keyword id="KW-1185">Reference proteome</keyword>
<sequence length="209" mass="22873">MQLSDRPLTAPGTAPRQATVSRRTGETDVQVFLNLDGTGRCQADTGIPFLDHMFDQIASHGLIDLEITAKGDLHIDDHHTNEDVGITFGLALAEALGDRKGIVRFGHFVAPLDEALVQVALDFSGRPHLTYGLTLPTERVGTYETQLVREFFVAIANNAKLTLHLRQLDGINSHHIIEATFKAFARSLRMATEVDPRRAGQIPSSKGVL</sequence>